<accession>Q94WW7</accession>
<accession>Q94WW6</accession>
<sequence>MTNTRKSHPLIKIMNHSFIDLPAPSNISAWWNFGSLLGVCLGLQILTGLFLAMHYTADTTTAFSSVTHICRDVNYGWLIRYMHANGASMFFIFLYLHIGRGIYYGSYTFTNTWNIGVLLLLAVMATAFMGYVLPWGQMSFWGATVITNLLSAIPYIGPTLVEWIWGGFSVDKATLTRFFAFHFILPFMITAMVMIHLLFLHETGSNNPSGVNSDSDKIPFHPYYTIKDVLGILFMMITLMSLVMFTPDLLGDPDNYTPANPLNTPPHIKPEWYFLFAYAILRSIPNKLGGVLALVFSILILTLFPILHSSKQRSMSFRPLSQCLMWMLVANLLILTWIGGQPVEHPFITIGQLASVTYFFTILILMPSTALMENKLLKW</sequence>
<geneLocation type="mitochondrion"/>
<reference key="1">
    <citation type="journal article" date="2001" name="Mol. Biol. Evol.">
        <title>Recurrent amplifications and deletions of satellite DNA accompanied chromosomal diversification in South American tuco-tucos (genus Ctenomys, Rodentia: Octodontidae): a phylogenetic approach.</title>
        <authorList>
            <person name="Slamovits C.H."/>
            <person name="Cook J.A."/>
            <person name="Lessa E.P."/>
            <person name="Rossi M.S."/>
        </authorList>
    </citation>
    <scope>NUCLEOTIDE SEQUENCE [GENOMIC DNA]</scope>
    <source>
        <strain>Isolate I995</strain>
        <strain>Isolate I998</strain>
    </source>
</reference>
<dbReference type="EMBL" id="AF370704">
    <property type="protein sequence ID" value="AAL01868.1"/>
    <property type="molecule type" value="Genomic_DNA"/>
</dbReference>
<dbReference type="EMBL" id="AF370705">
    <property type="protein sequence ID" value="AAL01869.1"/>
    <property type="molecule type" value="Genomic_DNA"/>
</dbReference>
<dbReference type="SMR" id="Q94WW7"/>
<dbReference type="GO" id="GO:0005743">
    <property type="term" value="C:mitochondrial inner membrane"/>
    <property type="evidence" value="ECO:0007669"/>
    <property type="project" value="UniProtKB-SubCell"/>
</dbReference>
<dbReference type="GO" id="GO:0045275">
    <property type="term" value="C:respiratory chain complex III"/>
    <property type="evidence" value="ECO:0007669"/>
    <property type="project" value="InterPro"/>
</dbReference>
<dbReference type="GO" id="GO:0046872">
    <property type="term" value="F:metal ion binding"/>
    <property type="evidence" value="ECO:0007669"/>
    <property type="project" value="UniProtKB-KW"/>
</dbReference>
<dbReference type="GO" id="GO:0008121">
    <property type="term" value="F:ubiquinol-cytochrome-c reductase activity"/>
    <property type="evidence" value="ECO:0007669"/>
    <property type="project" value="InterPro"/>
</dbReference>
<dbReference type="GO" id="GO:0006122">
    <property type="term" value="P:mitochondrial electron transport, ubiquinol to cytochrome c"/>
    <property type="evidence" value="ECO:0007669"/>
    <property type="project" value="TreeGrafter"/>
</dbReference>
<dbReference type="CDD" id="cd00290">
    <property type="entry name" value="cytochrome_b_C"/>
    <property type="match status" value="1"/>
</dbReference>
<dbReference type="CDD" id="cd00284">
    <property type="entry name" value="Cytochrome_b_N"/>
    <property type="match status" value="1"/>
</dbReference>
<dbReference type="FunFam" id="1.20.810.10:FF:000002">
    <property type="entry name" value="Cytochrome b"/>
    <property type="match status" value="1"/>
</dbReference>
<dbReference type="Gene3D" id="1.20.810.10">
    <property type="entry name" value="Cytochrome Bc1 Complex, Chain C"/>
    <property type="match status" value="1"/>
</dbReference>
<dbReference type="InterPro" id="IPR005798">
    <property type="entry name" value="Cyt_b/b6_C"/>
</dbReference>
<dbReference type="InterPro" id="IPR036150">
    <property type="entry name" value="Cyt_b/b6_C_sf"/>
</dbReference>
<dbReference type="InterPro" id="IPR005797">
    <property type="entry name" value="Cyt_b/b6_N"/>
</dbReference>
<dbReference type="InterPro" id="IPR027387">
    <property type="entry name" value="Cytb/b6-like_sf"/>
</dbReference>
<dbReference type="InterPro" id="IPR030689">
    <property type="entry name" value="Cytochrome_b"/>
</dbReference>
<dbReference type="InterPro" id="IPR048260">
    <property type="entry name" value="Cytochrome_b_C_euk/bac"/>
</dbReference>
<dbReference type="InterPro" id="IPR048259">
    <property type="entry name" value="Cytochrome_b_N_euk/bac"/>
</dbReference>
<dbReference type="InterPro" id="IPR016174">
    <property type="entry name" value="Di-haem_cyt_TM"/>
</dbReference>
<dbReference type="PANTHER" id="PTHR19271">
    <property type="entry name" value="CYTOCHROME B"/>
    <property type="match status" value="1"/>
</dbReference>
<dbReference type="PANTHER" id="PTHR19271:SF16">
    <property type="entry name" value="CYTOCHROME B"/>
    <property type="match status" value="1"/>
</dbReference>
<dbReference type="Pfam" id="PF00032">
    <property type="entry name" value="Cytochrom_B_C"/>
    <property type="match status" value="1"/>
</dbReference>
<dbReference type="Pfam" id="PF00033">
    <property type="entry name" value="Cytochrome_B"/>
    <property type="match status" value="1"/>
</dbReference>
<dbReference type="PIRSF" id="PIRSF038885">
    <property type="entry name" value="COB"/>
    <property type="match status" value="1"/>
</dbReference>
<dbReference type="SUPFAM" id="SSF81648">
    <property type="entry name" value="a domain/subunit of cytochrome bc1 complex (Ubiquinol-cytochrome c reductase)"/>
    <property type="match status" value="1"/>
</dbReference>
<dbReference type="SUPFAM" id="SSF81342">
    <property type="entry name" value="Transmembrane di-heme cytochromes"/>
    <property type="match status" value="1"/>
</dbReference>
<dbReference type="PROSITE" id="PS51003">
    <property type="entry name" value="CYTB_CTER"/>
    <property type="match status" value="1"/>
</dbReference>
<dbReference type="PROSITE" id="PS51002">
    <property type="entry name" value="CYTB_NTER"/>
    <property type="match status" value="1"/>
</dbReference>
<feature type="chain" id="PRO_0000255022" description="Cytochrome b">
    <location>
        <begin position="1"/>
        <end position="379"/>
    </location>
</feature>
<feature type="transmembrane region" description="Helical" evidence="2">
    <location>
        <begin position="33"/>
        <end position="53"/>
    </location>
</feature>
<feature type="transmembrane region" description="Helical" evidence="2">
    <location>
        <begin position="77"/>
        <end position="98"/>
    </location>
</feature>
<feature type="transmembrane region" description="Helical" evidence="2">
    <location>
        <begin position="113"/>
        <end position="133"/>
    </location>
</feature>
<feature type="transmembrane region" description="Helical" evidence="2">
    <location>
        <begin position="178"/>
        <end position="198"/>
    </location>
</feature>
<feature type="transmembrane region" description="Helical" evidence="2">
    <location>
        <begin position="226"/>
        <end position="246"/>
    </location>
</feature>
<feature type="transmembrane region" description="Helical" evidence="2">
    <location>
        <begin position="288"/>
        <end position="308"/>
    </location>
</feature>
<feature type="transmembrane region" description="Helical" evidence="2">
    <location>
        <begin position="320"/>
        <end position="340"/>
    </location>
</feature>
<feature type="transmembrane region" description="Helical" evidence="2">
    <location>
        <begin position="347"/>
        <end position="367"/>
    </location>
</feature>
<feature type="binding site" description="axial binding residue" evidence="2">
    <location>
        <position position="83"/>
    </location>
    <ligand>
        <name>heme b</name>
        <dbReference type="ChEBI" id="CHEBI:60344"/>
        <label>b562</label>
    </ligand>
    <ligandPart>
        <name>Fe</name>
        <dbReference type="ChEBI" id="CHEBI:18248"/>
    </ligandPart>
</feature>
<feature type="binding site" description="axial binding residue" evidence="2">
    <location>
        <position position="97"/>
    </location>
    <ligand>
        <name>heme b</name>
        <dbReference type="ChEBI" id="CHEBI:60344"/>
        <label>b566</label>
    </ligand>
    <ligandPart>
        <name>Fe</name>
        <dbReference type="ChEBI" id="CHEBI:18248"/>
    </ligandPart>
</feature>
<feature type="binding site" description="axial binding residue" evidence="2">
    <location>
        <position position="182"/>
    </location>
    <ligand>
        <name>heme b</name>
        <dbReference type="ChEBI" id="CHEBI:60344"/>
        <label>b562</label>
    </ligand>
    <ligandPart>
        <name>Fe</name>
        <dbReference type="ChEBI" id="CHEBI:18248"/>
    </ligandPart>
</feature>
<feature type="binding site" description="axial binding residue" evidence="2">
    <location>
        <position position="196"/>
    </location>
    <ligand>
        <name>heme b</name>
        <dbReference type="ChEBI" id="CHEBI:60344"/>
        <label>b566</label>
    </ligand>
    <ligandPart>
        <name>Fe</name>
        <dbReference type="ChEBI" id="CHEBI:18248"/>
    </ligandPart>
</feature>
<feature type="binding site" evidence="2">
    <location>
        <position position="201"/>
    </location>
    <ligand>
        <name>a ubiquinone</name>
        <dbReference type="ChEBI" id="CHEBI:16389"/>
    </ligand>
</feature>
<feature type="sequence variant" description="In strain: Isolate I995.">
    <original>F</original>
    <variation>S</variation>
    <location>
        <position position="50"/>
    </location>
</feature>
<gene>
    <name type="primary">MT-CYB</name>
    <name type="synonym">COB</name>
    <name type="synonym">CYTB</name>
    <name type="synonym">MTCYB</name>
</gene>
<evidence type="ECO:0000250" key="1"/>
<evidence type="ECO:0000250" key="2">
    <source>
        <dbReference type="UniProtKB" id="P00157"/>
    </source>
</evidence>
<evidence type="ECO:0000255" key="3">
    <source>
        <dbReference type="PROSITE-ProRule" id="PRU00967"/>
    </source>
</evidence>
<evidence type="ECO:0000255" key="4">
    <source>
        <dbReference type="PROSITE-ProRule" id="PRU00968"/>
    </source>
</evidence>
<proteinExistence type="inferred from homology"/>
<protein>
    <recommendedName>
        <fullName>Cytochrome b</fullName>
    </recommendedName>
    <alternativeName>
        <fullName>Complex III subunit 3</fullName>
    </alternativeName>
    <alternativeName>
        <fullName>Complex III subunit III</fullName>
    </alternativeName>
    <alternativeName>
        <fullName>Cytochrome b-c1 complex subunit 3</fullName>
    </alternativeName>
    <alternativeName>
        <fullName>Ubiquinol-cytochrome-c reductase complex cytochrome b subunit</fullName>
    </alternativeName>
</protein>
<keyword id="KW-0249">Electron transport</keyword>
<keyword id="KW-0349">Heme</keyword>
<keyword id="KW-0408">Iron</keyword>
<keyword id="KW-0472">Membrane</keyword>
<keyword id="KW-0479">Metal-binding</keyword>
<keyword id="KW-0496">Mitochondrion</keyword>
<keyword id="KW-0999">Mitochondrion inner membrane</keyword>
<keyword id="KW-0679">Respiratory chain</keyword>
<keyword id="KW-0812">Transmembrane</keyword>
<keyword id="KW-1133">Transmembrane helix</keyword>
<keyword id="KW-0813">Transport</keyword>
<keyword id="KW-0830">Ubiquinone</keyword>
<name>CYB_CTELA</name>
<comment type="function">
    <text evidence="2">Component of the ubiquinol-cytochrome c reductase complex (complex III or cytochrome b-c1 complex) that is part of the mitochondrial respiratory chain. The b-c1 complex mediates electron transfer from ubiquinol to cytochrome c. Contributes to the generation of a proton gradient across the mitochondrial membrane that is then used for ATP synthesis.</text>
</comment>
<comment type="cofactor">
    <cofactor evidence="2">
        <name>heme b</name>
        <dbReference type="ChEBI" id="CHEBI:60344"/>
    </cofactor>
    <text evidence="2">Binds 2 heme b groups non-covalently.</text>
</comment>
<comment type="subunit">
    <text evidence="2">The cytochrome bc1 complex contains 11 subunits: 3 respiratory subunits (MT-CYB, CYC1 and UQCRFS1), 2 core proteins (UQCRC1 and UQCRC2) and 6 low-molecular weight proteins (UQCRH/QCR6, UQCRB/QCR7, UQCRQ/QCR8, UQCR10/QCR9, UQCR11/QCR10 and a cleavage product of UQCRFS1). This cytochrome bc1 complex then forms a dimer.</text>
</comment>
<comment type="subcellular location">
    <subcellularLocation>
        <location evidence="2">Mitochondrion inner membrane</location>
        <topology evidence="2">Multi-pass membrane protein</topology>
    </subcellularLocation>
</comment>
<comment type="miscellaneous">
    <text evidence="1">Heme 1 (or BL or b562) is low-potential and absorbs at about 562 nm, and heme 2 (or BH or b566) is high-potential and absorbs at about 566 nm.</text>
</comment>
<comment type="similarity">
    <text evidence="3 4">Belongs to the cytochrome b family.</text>
</comment>
<comment type="caution">
    <text evidence="2">The full-length protein contains only eight transmembrane helices, not nine as predicted by bioinformatics tools.</text>
</comment>
<organism>
    <name type="scientific">Ctenomys latro</name>
    <name type="common">Mottled tuco-tuco</name>
    <dbReference type="NCBI Taxonomy" id="112852"/>
    <lineage>
        <taxon>Eukaryota</taxon>
        <taxon>Metazoa</taxon>
        <taxon>Chordata</taxon>
        <taxon>Craniata</taxon>
        <taxon>Vertebrata</taxon>
        <taxon>Euteleostomi</taxon>
        <taxon>Mammalia</taxon>
        <taxon>Eutheria</taxon>
        <taxon>Euarchontoglires</taxon>
        <taxon>Glires</taxon>
        <taxon>Rodentia</taxon>
        <taxon>Hystricomorpha</taxon>
        <taxon>Ctenomyidae</taxon>
        <taxon>Ctenomys</taxon>
    </lineage>
</organism>